<protein>
    <recommendedName>
        <fullName>Ubiquitin-like protein 4A</fullName>
    </recommendedName>
</protein>
<proteinExistence type="evidence at transcript level"/>
<comment type="function">
    <text evidence="1">As part of a cytosolic protein quality control complex, the BAG6/BAT3 complex, maintains misfolded and hydrophobic patches-containing proteins in a soluble state and participates in their proper delivery to the endoplasmic reticulum or alternatively can promote their sorting to the proteasome where they undergo degradation. The BAG6/BAT3 complex is involved in the post-translational delivery of tail-anchored/type II transmembrane proteins to the endoplasmic reticulum membrane. Recruited to ribosomes, it interacts with the transmembrane region of newly synthesized tail-anchored proteins and together with SGTA and ASNA1 mediates their delivery to the endoplasmic reticulum. Client proteins that cannot be properly delivered to the endoplasmic reticulum are ubiquitinated and sorted to the proteasome. Similarly, the BAG6/BAT3 complex also functions as a sorting platform for proteins of the secretory pathway that are mislocalized to the cytosol either delivering them to the proteasome for degradation or to the endoplasmic reticulum. The BAG6/BAT3 complex also plays a role in the endoplasmic reticulum-associated degradation (ERAD), a quality control mechanism that eliminates unwanted proteins of the endoplasmic reticulum through their retrotranslocation to the cytosol and their targeting to the proteasome. It maintains these retrotranslocated proteins in an unfolded yet soluble state condition in the cytosol to ensure their proper delivery to the proteasome.</text>
</comment>
<comment type="subunit">
    <text evidence="1">Component of the BAG6/BAT3 complex, at least composed of BAG6, UBL4A and GET4/TRC35. Interacts with BAG6; the interaction is direct and required for UBL4A protein stability. Interacts with USP13; may be indirect via BAG6.</text>
</comment>
<comment type="subcellular location">
    <subcellularLocation>
        <location evidence="1">Cytoplasm</location>
        <location evidence="1">Cytosol</location>
    </subcellularLocation>
    <subcellularLocation>
        <location evidence="1">Nucleus</location>
    </subcellularLocation>
</comment>
<comment type="PTM">
    <text evidence="1">Polyubiquitinated. Ubiquitination by AMFR and deubiquitination by USP13 may regulate the interaction between the BAG6/BAT complex and SGTA and therefore may regulate client proteins fate.</text>
</comment>
<keyword id="KW-0963">Cytoplasm</keyword>
<keyword id="KW-1017">Isopeptide bond</keyword>
<keyword id="KW-0539">Nucleus</keyword>
<keyword id="KW-0597">Phosphoprotein</keyword>
<keyword id="KW-1185">Reference proteome</keyword>
<keyword id="KW-0813">Transport</keyword>
<keyword id="KW-0832">Ubl conjugation</keyword>
<evidence type="ECO:0000250" key="1">
    <source>
        <dbReference type="UniProtKB" id="P11441"/>
    </source>
</evidence>
<evidence type="ECO:0000255" key="2">
    <source>
        <dbReference type="PROSITE-ProRule" id="PRU00214"/>
    </source>
</evidence>
<name>UBL4A_PONAB</name>
<accession>Q5R4T1</accession>
<sequence length="157" mass="17760">MQLTVKALQGRECSLQVPEDELVSTLKQLVSEKLNVPVRQQRLLFKGKALADGKRLSDYSIGPNSKLNLVVKPLEKVLLEEGEAQRLADSPPPQVWQLISKVLARHFSAADASRVLEQPQRDYERSLSRLTLDDIERLASRFLHPEVTETMEKGFSK</sequence>
<reference key="1">
    <citation type="submission" date="2004-11" db="EMBL/GenBank/DDBJ databases">
        <authorList>
            <consortium name="The German cDNA consortium"/>
        </authorList>
    </citation>
    <scope>NUCLEOTIDE SEQUENCE [LARGE SCALE MRNA]</scope>
    <source>
        <tissue>Brain cortex</tissue>
    </source>
</reference>
<organism>
    <name type="scientific">Pongo abelii</name>
    <name type="common">Sumatran orangutan</name>
    <name type="synonym">Pongo pygmaeus abelii</name>
    <dbReference type="NCBI Taxonomy" id="9601"/>
    <lineage>
        <taxon>Eukaryota</taxon>
        <taxon>Metazoa</taxon>
        <taxon>Chordata</taxon>
        <taxon>Craniata</taxon>
        <taxon>Vertebrata</taxon>
        <taxon>Euteleostomi</taxon>
        <taxon>Mammalia</taxon>
        <taxon>Eutheria</taxon>
        <taxon>Euarchontoglires</taxon>
        <taxon>Primates</taxon>
        <taxon>Haplorrhini</taxon>
        <taxon>Catarrhini</taxon>
        <taxon>Hominidae</taxon>
        <taxon>Pongo</taxon>
    </lineage>
</organism>
<dbReference type="EMBL" id="CR861163">
    <property type="protein sequence ID" value="CAH93235.1"/>
    <property type="molecule type" value="mRNA"/>
</dbReference>
<dbReference type="RefSeq" id="NP_001126901.1">
    <property type="nucleotide sequence ID" value="NM_001133429.1"/>
</dbReference>
<dbReference type="BMRB" id="Q5R4T1"/>
<dbReference type="SMR" id="Q5R4T1"/>
<dbReference type="FunCoup" id="Q5R4T1">
    <property type="interactions" value="2173"/>
</dbReference>
<dbReference type="STRING" id="9601.ENSPPYP00000023375"/>
<dbReference type="GeneID" id="100173917"/>
<dbReference type="KEGG" id="pon:100173917"/>
<dbReference type="CTD" id="8266"/>
<dbReference type="eggNOG" id="KOG0001">
    <property type="taxonomic scope" value="Eukaryota"/>
</dbReference>
<dbReference type="InParanoid" id="Q5R4T1"/>
<dbReference type="OrthoDB" id="417450at2759"/>
<dbReference type="Proteomes" id="UP000001595">
    <property type="component" value="Unplaced"/>
</dbReference>
<dbReference type="GO" id="GO:0071818">
    <property type="term" value="C:BAT3 complex"/>
    <property type="evidence" value="ECO:0000250"/>
    <property type="project" value="UniProtKB"/>
</dbReference>
<dbReference type="GO" id="GO:0005829">
    <property type="term" value="C:cytosol"/>
    <property type="evidence" value="ECO:0000250"/>
    <property type="project" value="UniProtKB"/>
</dbReference>
<dbReference type="GO" id="GO:0005634">
    <property type="term" value="C:nucleus"/>
    <property type="evidence" value="ECO:0007669"/>
    <property type="project" value="UniProtKB-SubCell"/>
</dbReference>
<dbReference type="GO" id="GO:0051087">
    <property type="term" value="F:protein-folding chaperone binding"/>
    <property type="evidence" value="ECO:0007669"/>
    <property type="project" value="TreeGrafter"/>
</dbReference>
<dbReference type="GO" id="GO:0006620">
    <property type="term" value="P:post-translational protein targeting to endoplasmic reticulum membrane"/>
    <property type="evidence" value="ECO:0007669"/>
    <property type="project" value="InterPro"/>
</dbReference>
<dbReference type="GO" id="GO:0071816">
    <property type="term" value="P:tail-anchored membrane protein insertion into ER membrane"/>
    <property type="evidence" value="ECO:0000250"/>
    <property type="project" value="UniProtKB"/>
</dbReference>
<dbReference type="CDD" id="cd01807">
    <property type="entry name" value="Ubl_UBL4A_like"/>
    <property type="match status" value="1"/>
</dbReference>
<dbReference type="FunFam" id="3.10.20.90:FF:000144">
    <property type="entry name" value="Ubiquitin-like protein 4A"/>
    <property type="match status" value="1"/>
</dbReference>
<dbReference type="Gene3D" id="3.10.20.90">
    <property type="entry name" value="Phosphatidylinositol 3-kinase Catalytic Subunit, Chain A, domain 1"/>
    <property type="match status" value="1"/>
</dbReference>
<dbReference type="InterPro" id="IPR000626">
    <property type="entry name" value="Ubiquitin-like_dom"/>
</dbReference>
<dbReference type="InterPro" id="IPR029071">
    <property type="entry name" value="Ubiquitin-like_domsf"/>
</dbReference>
<dbReference type="InterPro" id="IPR019954">
    <property type="entry name" value="Ubiquitin_CS"/>
</dbReference>
<dbReference type="InterPro" id="IPR019956">
    <property type="entry name" value="Ubiquitin_dom"/>
</dbReference>
<dbReference type="InterPro" id="IPR041421">
    <property type="entry name" value="Ubl4_C_TUGS"/>
</dbReference>
<dbReference type="InterPro" id="IPR047154">
    <property type="entry name" value="UBL4A-like"/>
</dbReference>
<dbReference type="InterPro" id="IPR044724">
    <property type="entry name" value="Ubl_UBL4A-like"/>
</dbReference>
<dbReference type="PANTHER" id="PTHR46555">
    <property type="entry name" value="UBIQUITIN-LIKE PROTEIN 4A"/>
    <property type="match status" value="1"/>
</dbReference>
<dbReference type="PANTHER" id="PTHR46555:SF1">
    <property type="entry name" value="UBIQUITIN-LIKE PROTEIN 4A"/>
    <property type="match status" value="1"/>
</dbReference>
<dbReference type="Pfam" id="PF17840">
    <property type="entry name" value="Tugs"/>
    <property type="match status" value="1"/>
</dbReference>
<dbReference type="Pfam" id="PF00240">
    <property type="entry name" value="ubiquitin"/>
    <property type="match status" value="1"/>
</dbReference>
<dbReference type="PRINTS" id="PR00348">
    <property type="entry name" value="UBIQUITIN"/>
</dbReference>
<dbReference type="SMART" id="SM00213">
    <property type="entry name" value="UBQ"/>
    <property type="match status" value="1"/>
</dbReference>
<dbReference type="SUPFAM" id="SSF54236">
    <property type="entry name" value="Ubiquitin-like"/>
    <property type="match status" value="1"/>
</dbReference>
<dbReference type="PROSITE" id="PS00299">
    <property type="entry name" value="UBIQUITIN_1"/>
    <property type="match status" value="1"/>
</dbReference>
<dbReference type="PROSITE" id="PS50053">
    <property type="entry name" value="UBIQUITIN_2"/>
    <property type="match status" value="1"/>
</dbReference>
<gene>
    <name type="primary">UBL4A</name>
</gene>
<feature type="chain" id="PRO_0000403737" description="Ubiquitin-like protein 4A">
    <location>
        <begin position="1"/>
        <end position="157"/>
    </location>
</feature>
<feature type="domain" description="Ubiquitin-like" evidence="2">
    <location>
        <begin position="1"/>
        <end position="76"/>
    </location>
</feature>
<feature type="region of interest" description="Required and sufficient for interaction with BAG6" evidence="1">
    <location>
        <begin position="96"/>
        <end position="138"/>
    </location>
</feature>
<feature type="modified residue" description="Phosphoserine" evidence="1">
    <location>
        <position position="90"/>
    </location>
</feature>
<feature type="cross-link" description="Glycyl lysine isopeptide (Lys-Gly) (interchain with G-Cter in ubiquitin)" evidence="1">
    <location>
        <position position="48"/>
    </location>
</feature>